<protein>
    <recommendedName>
        <fullName>Uncharacterized protein BpOF4_21044</fullName>
    </recommendedName>
    <alternativeName>
        <fullName>ORFB</fullName>
    </alternativeName>
</protein>
<organism>
    <name type="scientific">Alkalihalophilus pseudofirmus (strain ATCC BAA-2126 / JCM 17055 / OF4)</name>
    <name type="common">Bacillus pseudofirmus</name>
    <dbReference type="NCBI Taxonomy" id="398511"/>
    <lineage>
        <taxon>Bacteria</taxon>
        <taxon>Bacillati</taxon>
        <taxon>Bacillota</taxon>
        <taxon>Bacilli</taxon>
        <taxon>Bacillales</taxon>
        <taxon>Bacillaceae</taxon>
        <taxon>Alkalihalophilus</taxon>
    </lineage>
</organism>
<proteinExistence type="predicted"/>
<gene>
    <name type="ordered locus">BpOF4_21044</name>
</gene>
<comment type="subcellular location">
    <subcellularLocation>
        <location evidence="2">Cell membrane</location>
        <topology evidence="2">Multi-pass membrane protein</topology>
    </subcellularLocation>
</comment>
<comment type="sequence caution" evidence="2">
    <conflict type="erroneous initiation">
        <sequence resource="EMBL-CDS" id="ADC52204"/>
    </conflict>
    <text>Truncated N-terminus.</text>
</comment>
<sequence length="108" mass="12555">MNEIFKELEGDCMGENVQLKDVIFNDSKYSKTKKVLAIMFITFVFLLQVNGTDKMIGFIFVFTGTVIGVTYSVCKLLFYNTKRYIKDIVFLIIFVCLFVWGIITFFNL</sequence>
<accession>Q45130</accession>
<accession>D3G1H8</accession>
<dbReference type="EMBL" id="U39410">
    <property type="protein sequence ID" value="AAB05370.1"/>
    <property type="molecule type" value="Genomic_DNA"/>
</dbReference>
<dbReference type="EMBL" id="CP001879">
    <property type="protein sequence ID" value="ADC52204.1"/>
    <property type="status" value="ALT_INIT"/>
    <property type="molecule type" value="Genomic_DNA"/>
</dbReference>
<dbReference type="RefSeq" id="WP_041823163.1">
    <property type="nucleotide sequence ID" value="NC_013792.1"/>
</dbReference>
<dbReference type="SMR" id="Q45130"/>
<dbReference type="KEGG" id="bpf:BpOF4_21044"/>
<dbReference type="HOGENOM" id="CLU_2354024_0_0_9"/>
<dbReference type="Proteomes" id="UP000001544">
    <property type="component" value="Plasmid pBpOF4-01"/>
</dbReference>
<dbReference type="GO" id="GO:0005886">
    <property type="term" value="C:plasma membrane"/>
    <property type="evidence" value="ECO:0007669"/>
    <property type="project" value="UniProtKB-SubCell"/>
</dbReference>
<evidence type="ECO:0000255" key="1"/>
<evidence type="ECO:0000305" key="2"/>
<keyword id="KW-1003">Cell membrane</keyword>
<keyword id="KW-0472">Membrane</keyword>
<keyword id="KW-0614">Plasmid</keyword>
<keyword id="KW-1185">Reference proteome</keyword>
<keyword id="KW-0812">Transmembrane</keyword>
<keyword id="KW-1133">Transmembrane helix</keyword>
<name>Y4208_ALKPO</name>
<geneLocation type="plasmid">
    <name>pBpOF4-01</name>
</geneLocation>
<feature type="chain" id="PRO_0000066241" description="Uncharacterized protein BpOF4_21044">
    <location>
        <begin position="1"/>
        <end position="108"/>
    </location>
</feature>
<feature type="transmembrane region" description="Helical" evidence="1">
    <location>
        <begin position="36"/>
        <end position="56"/>
    </location>
</feature>
<feature type="transmembrane region" description="Helical" evidence="1">
    <location>
        <begin position="58"/>
        <end position="78"/>
    </location>
</feature>
<feature type="transmembrane region" description="Helical" evidence="1">
    <location>
        <begin position="88"/>
        <end position="108"/>
    </location>
</feature>
<reference key="1">
    <citation type="journal article" date="1996" name="J. Bacteriol.">
        <title>Purification of a cytochrome bd terminal oxidase encoded by the Escherichia coli app locus from a delta cyo delta cyd strain complemented by genes from Bacillus firmus OF4.</title>
        <authorList>
            <person name="Sturr M.G."/>
            <person name="Krulwich T.A."/>
            <person name="Hicks D.B."/>
        </authorList>
    </citation>
    <scope>NUCLEOTIDE SEQUENCE [GENOMIC DNA]</scope>
</reference>
<reference key="2">
    <citation type="journal article" date="2011" name="Environ. Microbiol.">
        <title>Genome of alkaliphilic Bacillus pseudofirmus OF4 reveals adaptations that support the ability to grow in an external pH range from 7.5 to 11.4.</title>
        <authorList>
            <person name="Janto B."/>
            <person name="Ahmed A."/>
            <person name="Ito M."/>
            <person name="Liu J."/>
            <person name="Hicks D.B."/>
            <person name="Pagni S."/>
            <person name="Fackelmayer O.J."/>
            <person name="Smith T.A."/>
            <person name="Earl J."/>
            <person name="Elbourne L.D."/>
            <person name="Hassan K."/>
            <person name="Paulsen I.T."/>
            <person name="Kolsto A.B."/>
            <person name="Tourasse N.J."/>
            <person name="Ehrlich G.D."/>
            <person name="Boissy R."/>
            <person name="Ivey D.M."/>
            <person name="Li G."/>
            <person name="Xue Y."/>
            <person name="Ma Y."/>
            <person name="Hu F.Z."/>
            <person name="Krulwich T.A."/>
        </authorList>
    </citation>
    <scope>NUCLEOTIDE SEQUENCE [LARGE SCALE GENOMIC DNA]</scope>
    <source>
        <strain>ATCC BAA-2126 / JCM 17055 / OF4</strain>
        <plasmid>pBpOF4-01</plasmid>
    </source>
</reference>